<gene>
    <name type="ordered locus">War-142</name>
</gene>
<comment type="function">
    <text evidence="1">Essential for viral fusion with host endosomal membrane and core release.</text>
</comment>
<comment type="subunit">
    <text evidence="1">Interacts with A151R.</text>
</comment>
<comment type="subcellular location">
    <subcellularLocation>
        <location evidence="1">Host membrane</location>
        <topology evidence="1">Single-pass type II membrane protein</topology>
    </subcellularLocation>
    <subcellularLocation>
        <location evidence="1">Virion membrane</location>
    </subcellularLocation>
    <text evidence="1">Probably part of the virion inner membrane.</text>
</comment>
<comment type="similarity">
    <text evidence="3">Belongs to the asfivirus E248R family.</text>
</comment>
<keyword id="KW-1231">Capsid inner membrane protein</keyword>
<keyword id="KW-1043">Host membrane</keyword>
<keyword id="KW-0449">Lipoprotein</keyword>
<keyword id="KW-0472">Membrane</keyword>
<keyword id="KW-0519">Myristate</keyword>
<keyword id="KW-0735">Signal-anchor</keyword>
<keyword id="KW-0812">Transmembrane</keyword>
<keyword id="KW-1133">Transmembrane helix</keyword>
<keyword id="KW-0946">Virion</keyword>
<accession>P0CAB2</accession>
<organismHost>
    <name type="scientific">Ornithodoros</name>
    <name type="common">relapsing fever ticks</name>
    <dbReference type="NCBI Taxonomy" id="6937"/>
</organismHost>
<organismHost>
    <name type="scientific">Phacochoerus aethiopicus</name>
    <name type="common">Warthog</name>
    <dbReference type="NCBI Taxonomy" id="85517"/>
</organismHost>
<organismHost>
    <name type="scientific">Phacochoerus africanus</name>
    <name type="common">Warthog</name>
    <dbReference type="NCBI Taxonomy" id="41426"/>
</organismHost>
<organismHost>
    <name type="scientific">Potamochoerus larvatus</name>
    <name type="common">Bushpig</name>
    <dbReference type="NCBI Taxonomy" id="273792"/>
</organismHost>
<organismHost>
    <name type="scientific">Sus scrofa</name>
    <name type="common">Pig</name>
    <dbReference type="NCBI Taxonomy" id="9823"/>
</organismHost>
<feature type="initiator methionine" description="Removed" evidence="2">
    <location>
        <position position="1"/>
    </location>
</feature>
<feature type="chain" id="PRO_0000373608" description="Inner membrane protein pE248R">
    <location>
        <begin position="2"/>
        <end position="248"/>
    </location>
</feature>
<feature type="topological domain" description="Cytoplasmic" evidence="1">
    <location>
        <begin position="2"/>
        <end position="199"/>
    </location>
</feature>
<feature type="transmembrane region" description="Helical" evidence="2">
    <location>
        <begin position="200"/>
        <end position="220"/>
    </location>
</feature>
<feature type="topological domain" description="Extracellular" evidence="1">
    <location>
        <begin position="221"/>
        <end position="248"/>
    </location>
</feature>
<feature type="lipid moiety-binding region" description="N-myristoyl glycine; by host" evidence="1">
    <location>
        <position position="2"/>
    </location>
</feature>
<dbReference type="EMBL" id="AY261366">
    <property type="status" value="NOT_ANNOTATED_CDS"/>
    <property type="molecule type" value="Genomic_DNA"/>
</dbReference>
<dbReference type="SMR" id="P0CAB2"/>
<dbReference type="Proteomes" id="UP000000858">
    <property type="component" value="Segment"/>
</dbReference>
<dbReference type="GO" id="GO:0033644">
    <property type="term" value="C:host cell membrane"/>
    <property type="evidence" value="ECO:0007669"/>
    <property type="project" value="UniProtKB-SubCell"/>
</dbReference>
<dbReference type="GO" id="GO:0016020">
    <property type="term" value="C:membrane"/>
    <property type="evidence" value="ECO:0007669"/>
    <property type="project" value="UniProtKB-KW"/>
</dbReference>
<dbReference type="GO" id="GO:0039641">
    <property type="term" value="C:viral inner membrane"/>
    <property type="evidence" value="ECO:0007669"/>
    <property type="project" value="UniProtKB-KW"/>
</dbReference>
<dbReference type="GO" id="GO:0055036">
    <property type="term" value="C:virion membrane"/>
    <property type="evidence" value="ECO:0007669"/>
    <property type="project" value="UniProtKB-SubCell"/>
</dbReference>
<dbReference type="InterPro" id="IPR003472">
    <property type="entry name" value="Virion_mem_poxvirus_L1"/>
</dbReference>
<dbReference type="Pfam" id="PF02442">
    <property type="entry name" value="L1R_F9L"/>
    <property type="match status" value="1"/>
</dbReference>
<organism>
    <name type="scientific">African swine fever virus (isolate Warthog/Namibia/Wart80/1980)</name>
    <name type="common">ASFV</name>
    <dbReference type="NCBI Taxonomy" id="561444"/>
    <lineage>
        <taxon>Viruses</taxon>
        <taxon>Varidnaviria</taxon>
        <taxon>Bamfordvirae</taxon>
        <taxon>Nucleocytoviricota</taxon>
        <taxon>Pokkesviricetes</taxon>
        <taxon>Asfuvirales</taxon>
        <taxon>Asfarviridae</taxon>
        <taxon>Asfivirus</taxon>
        <taxon>African swine fever virus</taxon>
    </lineage>
</organism>
<reference key="1">
    <citation type="submission" date="2003-03" db="EMBL/GenBank/DDBJ databases">
        <title>African swine fever virus genomes.</title>
        <authorList>
            <person name="Kutish G.F."/>
            <person name="Rock D.L."/>
        </authorList>
    </citation>
    <scope>NUCLEOTIDE SEQUENCE [LARGE SCALE GENOMIC DNA]</scope>
</reference>
<protein>
    <recommendedName>
        <fullName>Inner membrane protein pE248R</fullName>
        <shortName>pE248R</shortName>
    </recommendedName>
</protein>
<evidence type="ECO:0000250" key="1">
    <source>
        <dbReference type="UniProtKB" id="Q65200"/>
    </source>
</evidence>
<evidence type="ECO:0000255" key="2"/>
<evidence type="ECO:0000305" key="3"/>
<sequence length="248" mass="27434">MGGSTSKNSFKNTTNIISNSIFNQMQSCISMLDGKNYIGVFGDGNILNHVFQDLNLSLDTSCVQKHVNKENFITNLSNQITQNLKDQEVALTQWMDAGHHDQKTDIEENIKVNLTTTLIQNCVSSLSGMNVLVVKGNGNIVENATQKQSQQIISNCLQGSKQAIDTTTGITNTVNQYSHYTSKNFFDFIADAISAVFKNIMVAAVVIVLIIVGFIAVFYFLHSRHRHEEEEEAEPLISNKVLKNAAVS</sequence>
<name>E248R_ASFWA</name>
<proteinExistence type="inferred from homology"/>